<feature type="chain" id="PRO_0000355923" description="Maturase K">
    <location>
        <begin position="1"/>
        <end position="509"/>
    </location>
</feature>
<geneLocation type="chloroplast"/>
<organism>
    <name type="scientific">Citrus sinensis</name>
    <name type="common">Sweet orange</name>
    <name type="synonym">Citrus aurantium var. sinensis</name>
    <dbReference type="NCBI Taxonomy" id="2711"/>
    <lineage>
        <taxon>Eukaryota</taxon>
        <taxon>Viridiplantae</taxon>
        <taxon>Streptophyta</taxon>
        <taxon>Embryophyta</taxon>
        <taxon>Tracheophyta</taxon>
        <taxon>Spermatophyta</taxon>
        <taxon>Magnoliopsida</taxon>
        <taxon>eudicotyledons</taxon>
        <taxon>Gunneridae</taxon>
        <taxon>Pentapetalae</taxon>
        <taxon>rosids</taxon>
        <taxon>malvids</taxon>
        <taxon>Sapindales</taxon>
        <taxon>Rutaceae</taxon>
        <taxon>Aurantioideae</taxon>
        <taxon>Citrus</taxon>
    </lineage>
</organism>
<keyword id="KW-0150">Chloroplast</keyword>
<keyword id="KW-0507">mRNA processing</keyword>
<keyword id="KW-0934">Plastid</keyword>
<keyword id="KW-0694">RNA-binding</keyword>
<keyword id="KW-0819">tRNA processing</keyword>
<comment type="function">
    <text evidence="1">Usually encoded in the trnK tRNA gene intron. Probably assists in splicing its own and other chloroplast group II introns.</text>
</comment>
<comment type="subcellular location">
    <subcellularLocation>
        <location>Plastid</location>
        <location>Chloroplast</location>
    </subcellularLocation>
</comment>
<comment type="similarity">
    <text evidence="1">Belongs to the intron maturase 2 family. MatK subfamily.</text>
</comment>
<accession>Q09MJ7</accession>
<evidence type="ECO:0000255" key="1">
    <source>
        <dbReference type="HAMAP-Rule" id="MF_01390"/>
    </source>
</evidence>
<gene>
    <name evidence="1" type="primary">matK</name>
</gene>
<sequence>MEEFQVYLELDRSQQHDFLYPLLFREYIYVLAHDHGLNSSMMSLEGGFYDNKSSSLSVKRLITRMYQRINLSIAANDSNQNPIFGHNNKLYSQIISEVFAAVVEIPFSLRLVAFLEGKEIEKSPNFQSIHSIFPFFEDKLSHLNYVLDVRIPYPICPEILVQTLREWVKDASSLHLLRFFLHEYFNSNSLITPKNSISVFLKSNPRLLLFLYNSHVYEYESILFFLCNQSSHLQSTSFQVLVERTYFYGKVEHLVEVFAKDFQDILGLVKDPFMHYVRYQGKSILASKDTPLLMNKWKYYLVGLWQWHFHASSQPGRVQLNHLYLGKYAINFLGYLSGVRLNSLLVRSQMLENSFLIDNSMKKVDTTVPIIHLIGSLTKARFCNALGHPISKSTWSDFSDSHLIDRFVRICRNLSHYYSGSSKKKSLYRVKYILRLSCVKSLVRKHKSTVRAFLKRLGSELLEEFLMEEEHVLALLFPRASSTSRRFYLYRGRIWYLDIFCINDLVNYQ</sequence>
<proteinExistence type="inferred from homology"/>
<reference key="1">
    <citation type="journal article" date="2006" name="BMC Plant Biol.">
        <title>The complete chloroplast genome sequence of Citrus sinensis (L.) Osbeck var 'Ridge Pineapple': organization and phylogenetic relationships to other angiosperms.</title>
        <authorList>
            <person name="Bausher M.G."/>
            <person name="Singh N.D."/>
            <person name="Lee S.-B."/>
            <person name="Jansen R.K."/>
            <person name="Daniell H."/>
        </authorList>
    </citation>
    <scope>NUCLEOTIDE SEQUENCE [LARGE SCALE GENOMIC DNA]</scope>
    <source>
        <strain>cv. Osbeck var. Ridge Pineapple</strain>
    </source>
</reference>
<dbReference type="EMBL" id="DQ864733">
    <property type="protein sequence ID" value="ABI49001.1"/>
    <property type="molecule type" value="Genomic_DNA"/>
</dbReference>
<dbReference type="RefSeq" id="YP_740456.1">
    <property type="nucleotide sequence ID" value="NC_008334.1"/>
</dbReference>
<dbReference type="GeneID" id="4271242"/>
<dbReference type="KEGG" id="cit:4271242"/>
<dbReference type="OrthoDB" id="900506at71240"/>
<dbReference type="GO" id="GO:0009507">
    <property type="term" value="C:chloroplast"/>
    <property type="evidence" value="ECO:0007669"/>
    <property type="project" value="UniProtKB-SubCell"/>
</dbReference>
<dbReference type="GO" id="GO:0003723">
    <property type="term" value="F:RNA binding"/>
    <property type="evidence" value="ECO:0007669"/>
    <property type="project" value="UniProtKB-KW"/>
</dbReference>
<dbReference type="GO" id="GO:0006397">
    <property type="term" value="P:mRNA processing"/>
    <property type="evidence" value="ECO:0007669"/>
    <property type="project" value="UniProtKB-KW"/>
</dbReference>
<dbReference type="GO" id="GO:0008380">
    <property type="term" value="P:RNA splicing"/>
    <property type="evidence" value="ECO:0007669"/>
    <property type="project" value="UniProtKB-UniRule"/>
</dbReference>
<dbReference type="GO" id="GO:0008033">
    <property type="term" value="P:tRNA processing"/>
    <property type="evidence" value="ECO:0007669"/>
    <property type="project" value="UniProtKB-KW"/>
</dbReference>
<dbReference type="HAMAP" id="MF_01390">
    <property type="entry name" value="MatK"/>
    <property type="match status" value="1"/>
</dbReference>
<dbReference type="InterPro" id="IPR024937">
    <property type="entry name" value="Domain_X"/>
</dbReference>
<dbReference type="InterPro" id="IPR002866">
    <property type="entry name" value="Maturase_MatK"/>
</dbReference>
<dbReference type="InterPro" id="IPR024942">
    <property type="entry name" value="Maturase_MatK_N"/>
</dbReference>
<dbReference type="PANTHER" id="PTHR34811">
    <property type="entry name" value="MATURASE K"/>
    <property type="match status" value="1"/>
</dbReference>
<dbReference type="PANTHER" id="PTHR34811:SF1">
    <property type="entry name" value="MATURASE K"/>
    <property type="match status" value="1"/>
</dbReference>
<dbReference type="Pfam" id="PF01348">
    <property type="entry name" value="Intron_maturas2"/>
    <property type="match status" value="1"/>
</dbReference>
<dbReference type="Pfam" id="PF01824">
    <property type="entry name" value="MatK_N"/>
    <property type="match status" value="1"/>
</dbReference>
<protein>
    <recommendedName>
        <fullName evidence="1">Maturase K</fullName>
    </recommendedName>
    <alternativeName>
        <fullName evidence="1">Intron maturase</fullName>
    </alternativeName>
</protein>
<name>MATK_CITSI</name>